<sequence length="142" mass="11963">MKHLIPLIVMASVVLAVYADRGYGGGRRGGGYGGGGYGGGGGGYGGGGGGYGGGVGGGRGGGGGLGGGRGGGGGVIDGKDDVGLGGGGYGGGLGGGQGGGGGLGGGQGGGGGLGGGRGGGGYGGGGGGYGGGKYGGGKYGRK</sequence>
<evidence type="ECO:0000250" key="1">
    <source>
        <dbReference type="UniProtKB" id="Q8I948"/>
    </source>
</evidence>
<evidence type="ECO:0000255" key="2"/>
<evidence type="ECO:0000269" key="3">
    <source>
    </source>
</evidence>
<evidence type="ECO:0000303" key="4">
    <source>
    </source>
</evidence>
<evidence type="ECO:0000305" key="5"/>
<organism>
    <name type="scientific">Cupiennius salei</name>
    <name type="common">American wandering spider</name>
    <dbReference type="NCBI Taxonomy" id="6928"/>
    <lineage>
        <taxon>Eukaryota</taxon>
        <taxon>Metazoa</taxon>
        <taxon>Ecdysozoa</taxon>
        <taxon>Arthropoda</taxon>
        <taxon>Chelicerata</taxon>
        <taxon>Arachnida</taxon>
        <taxon>Araneae</taxon>
        <taxon>Araneomorphae</taxon>
        <taxon>Entelegynae</taxon>
        <taxon>Lycosoidea</taxon>
        <taxon>Ctenidae</taxon>
        <taxon>Cupiennius</taxon>
    </lineage>
</organism>
<accession>P86797</accession>
<dbReference type="GO" id="GO:0005576">
    <property type="term" value="C:extracellular region"/>
    <property type="evidence" value="ECO:0007669"/>
    <property type="project" value="UniProtKB-SubCell"/>
</dbReference>
<dbReference type="GO" id="GO:0042742">
    <property type="term" value="P:defense response to bacterium"/>
    <property type="evidence" value="ECO:0007669"/>
    <property type="project" value="UniProtKB-KW"/>
</dbReference>
<dbReference type="GO" id="GO:0045087">
    <property type="term" value="P:innate immune response"/>
    <property type="evidence" value="ECO:0007669"/>
    <property type="project" value="UniProtKB-KW"/>
</dbReference>
<dbReference type="PRINTS" id="PR01228">
    <property type="entry name" value="EGGSHELL"/>
</dbReference>
<proteinExistence type="evidence at protein level"/>
<keyword id="KW-0027">Amidation</keyword>
<keyword id="KW-0044">Antibiotic</keyword>
<keyword id="KW-0929">Antimicrobial</keyword>
<keyword id="KW-0903">Direct protein sequencing</keyword>
<keyword id="KW-0391">Immunity</keyword>
<keyword id="KW-0399">Innate immunity</keyword>
<keyword id="KW-0964">Secreted</keyword>
<keyword id="KW-0732">Signal</keyword>
<protein>
    <recommendedName>
        <fullName evidence="4">Ctenidin-3</fullName>
    </recommendedName>
</protein>
<reference evidence="5" key="1">
    <citation type="journal article" date="2010" name="Cell. Mol. Life Sci.">
        <title>Ctenidins: antimicrobial glycine-rich peptides from the hemocytes of the spider Cupiennius salei.</title>
        <authorList>
            <person name="Baumann T."/>
            <person name="Kampfer U."/>
            <person name="Schurch S."/>
            <person name="Schaller J."/>
            <person name="Largiader C."/>
            <person name="Nentwig W."/>
            <person name="Kuhn-Nentwig L."/>
        </authorList>
    </citation>
    <scope>NUCLEOTIDE SEQUENCE [GENOMIC DNA]</scope>
    <scope>PROTEIN SEQUENCE OF 20-39</scope>
    <scope>FUNCTION</scope>
    <scope>TISSUE SPECIFICITY</scope>
    <scope>MASS SPECTROMETRY</scope>
    <scope>AMIDATION AT TYR-139</scope>
    <source>
        <tissue evidence="3">Hemocyte</tissue>
    </source>
</reference>
<comment type="function">
    <text evidence="3">Antimicrobial protein with bacteriostatic activity against the Gram-negative bacterium E.coli, and very weak activity against the Gram-positive bacterium S.aureus. Lacks activity against the yeast C.albicans.</text>
</comment>
<comment type="subcellular location">
    <subcellularLocation>
        <location evidence="1">Secreted</location>
    </subcellularLocation>
</comment>
<comment type="tissue specificity">
    <text evidence="3">Expressed in hemocytes (at protein level).</text>
</comment>
<comment type="mass spectrometry" mass="9564.373" method="Electrospray" evidence="3"/>
<comment type="similarity">
    <text evidence="5">Belongs to the glycine-rich peptide family.</text>
</comment>
<name>CTEN3_CUPSA</name>
<feature type="signal peptide" evidence="2 3">
    <location>
        <begin position="1"/>
        <end position="19"/>
    </location>
</feature>
<feature type="chain" id="PRO_0000401098" description="Ctenidin-3" evidence="3">
    <location>
        <begin position="20"/>
        <end position="139"/>
    </location>
</feature>
<feature type="modified residue" description="Tyrosine amide" evidence="3">
    <location>
        <position position="139"/>
    </location>
</feature>